<feature type="chain" id="PRO_0000432035" description="AT-hook motif nuclear-localized protein 17">
    <location>
        <begin position="1"/>
        <end position="276"/>
    </location>
</feature>
<feature type="domain" description="PPC" evidence="2">
    <location>
        <begin position="80"/>
        <end position="230"/>
    </location>
</feature>
<feature type="DNA-binding region" description="A.T hook" evidence="6">
    <location>
        <begin position="56"/>
        <end position="68"/>
    </location>
</feature>
<feature type="region of interest" description="Disordered" evidence="3">
    <location>
        <begin position="1"/>
        <end position="80"/>
    </location>
</feature>
<feature type="region of interest" description="Disordered" evidence="3">
    <location>
        <begin position="212"/>
        <end position="248"/>
    </location>
</feature>
<feature type="compositionally biased region" description="Basic and acidic residues" evidence="3">
    <location>
        <begin position="1"/>
        <end position="10"/>
    </location>
</feature>
<feature type="compositionally biased region" description="Low complexity" evidence="3">
    <location>
        <begin position="20"/>
        <end position="31"/>
    </location>
</feature>
<feature type="compositionally biased region" description="Low complexity" evidence="3">
    <location>
        <begin position="40"/>
        <end position="49"/>
    </location>
</feature>
<feature type="compositionally biased region" description="Basic and acidic residues" evidence="3">
    <location>
        <begin position="212"/>
        <end position="227"/>
    </location>
</feature>
<feature type="compositionally biased region" description="Gly residues" evidence="3">
    <location>
        <begin position="233"/>
        <end position="248"/>
    </location>
</feature>
<proteinExistence type="evidence at transcript level"/>
<gene>
    <name evidence="5" type="primary">AHL17</name>
    <name evidence="7" type="ordered locus">At5g49700</name>
    <name evidence="8" type="ORF">K2I5.6</name>
</gene>
<comment type="function">
    <text evidence="1">Transcription factor that specifically binds AT-rich DNA sequences related to the nuclear matrix attachment regions (MARs).</text>
</comment>
<comment type="subcellular location">
    <subcellularLocation>
        <location evidence="1">Nucleus</location>
    </subcellularLocation>
</comment>
<comment type="domain">
    <text evidence="4">The PPC domain mediates interactions between AHL proteins.</text>
</comment>
<dbReference type="EMBL" id="AB025613">
    <property type="protein sequence ID" value="BAA98158.1"/>
    <property type="molecule type" value="Genomic_DNA"/>
</dbReference>
<dbReference type="EMBL" id="CP002688">
    <property type="protein sequence ID" value="AED95846.1"/>
    <property type="molecule type" value="Genomic_DNA"/>
</dbReference>
<dbReference type="EMBL" id="AB493783">
    <property type="protein sequence ID" value="BAH30621.1"/>
    <property type="molecule type" value="Genomic_DNA"/>
</dbReference>
<dbReference type="EMBL" id="BR000353">
    <property type="protein sequence ID" value="FAA00288.1"/>
    <property type="molecule type" value="mRNA"/>
</dbReference>
<dbReference type="RefSeq" id="NP_199781.1">
    <property type="nucleotide sequence ID" value="NM_124348.2"/>
</dbReference>
<dbReference type="SMR" id="Q9LTA2"/>
<dbReference type="FunCoup" id="Q9LTA2">
    <property type="interactions" value="1"/>
</dbReference>
<dbReference type="STRING" id="3702.Q9LTA2"/>
<dbReference type="iPTMnet" id="Q9LTA2"/>
<dbReference type="PaxDb" id="3702-AT5G49700.1"/>
<dbReference type="ProteomicsDB" id="244948"/>
<dbReference type="EnsemblPlants" id="AT5G49700.1">
    <property type="protein sequence ID" value="AT5G49700.1"/>
    <property type="gene ID" value="AT5G49700"/>
</dbReference>
<dbReference type="GeneID" id="835033"/>
<dbReference type="Gramene" id="AT5G49700.1">
    <property type="protein sequence ID" value="AT5G49700.1"/>
    <property type="gene ID" value="AT5G49700"/>
</dbReference>
<dbReference type="KEGG" id="ath:AT5G49700"/>
<dbReference type="Araport" id="AT5G49700"/>
<dbReference type="TAIR" id="AT5G49700">
    <property type="gene designation" value="AHL17"/>
</dbReference>
<dbReference type="eggNOG" id="ENOG502QUN4">
    <property type="taxonomic scope" value="Eukaryota"/>
</dbReference>
<dbReference type="HOGENOM" id="CLU_039808_2_0_1"/>
<dbReference type="InParanoid" id="Q9LTA2"/>
<dbReference type="OMA" id="QRECQTS"/>
<dbReference type="OrthoDB" id="782346at2759"/>
<dbReference type="PhylomeDB" id="Q9LTA2"/>
<dbReference type="PRO" id="PR:Q9LTA2"/>
<dbReference type="Proteomes" id="UP000006548">
    <property type="component" value="Chromosome 5"/>
</dbReference>
<dbReference type="ExpressionAtlas" id="Q9LTA2">
    <property type="expression patterns" value="baseline and differential"/>
</dbReference>
<dbReference type="GO" id="GO:0005634">
    <property type="term" value="C:nucleus"/>
    <property type="evidence" value="ECO:0007669"/>
    <property type="project" value="UniProtKB-SubCell"/>
</dbReference>
<dbReference type="GO" id="GO:0003680">
    <property type="term" value="F:minor groove of adenine-thymine-rich DNA binding"/>
    <property type="evidence" value="ECO:0007669"/>
    <property type="project" value="InterPro"/>
</dbReference>
<dbReference type="CDD" id="cd11378">
    <property type="entry name" value="DUF296"/>
    <property type="match status" value="1"/>
</dbReference>
<dbReference type="FunFam" id="3.30.1330.80:FF:000006">
    <property type="entry name" value="AT-hook motif nuclear-localized protein"/>
    <property type="match status" value="1"/>
</dbReference>
<dbReference type="Gene3D" id="3.30.1330.80">
    <property type="entry name" value="Hypothetical protein, similar to alpha- acetolactate decarboxylase, domain 2"/>
    <property type="match status" value="1"/>
</dbReference>
<dbReference type="InterPro" id="IPR014476">
    <property type="entry name" value="AHL15-29"/>
</dbReference>
<dbReference type="InterPro" id="IPR005175">
    <property type="entry name" value="PPC_dom"/>
</dbReference>
<dbReference type="PANTHER" id="PTHR31100">
    <property type="entry name" value="AT-HOOK MOTIF NUCLEAR-LOCALIZED PROTEIN 15"/>
    <property type="match status" value="1"/>
</dbReference>
<dbReference type="PANTHER" id="PTHR31100:SF69">
    <property type="entry name" value="AT-HOOK MOTIF NUCLEAR-LOCALIZED PROTEIN 17-RELATED"/>
    <property type="match status" value="1"/>
</dbReference>
<dbReference type="Pfam" id="PF03479">
    <property type="entry name" value="PCC"/>
    <property type="match status" value="1"/>
</dbReference>
<dbReference type="PIRSF" id="PIRSF016021">
    <property type="entry name" value="ESCAROLA"/>
    <property type="match status" value="1"/>
</dbReference>
<dbReference type="SUPFAM" id="SSF117856">
    <property type="entry name" value="AF0104/ALDC/Ptd012-like"/>
    <property type="match status" value="1"/>
</dbReference>
<dbReference type="PROSITE" id="PS51742">
    <property type="entry name" value="PPC"/>
    <property type="match status" value="1"/>
</dbReference>
<reference key="1">
    <citation type="submission" date="1999-04" db="EMBL/GenBank/DDBJ databases">
        <title>Structural analysis of Arabidopsis thaliana chromosome 5. XI.</title>
        <authorList>
            <person name="Kaneko T."/>
            <person name="Katoh T."/>
            <person name="Asamizu E."/>
            <person name="Sato S."/>
            <person name="Nakamura Y."/>
            <person name="Kotani H."/>
            <person name="Tabata S."/>
        </authorList>
    </citation>
    <scope>NUCLEOTIDE SEQUENCE [LARGE SCALE GENOMIC DNA]</scope>
    <source>
        <strain>cv. Columbia</strain>
    </source>
</reference>
<reference key="2">
    <citation type="journal article" date="2017" name="Plant J.">
        <title>Araport11: a complete reannotation of the Arabidopsis thaliana reference genome.</title>
        <authorList>
            <person name="Cheng C.Y."/>
            <person name="Krishnakumar V."/>
            <person name="Chan A.P."/>
            <person name="Thibaud-Nissen F."/>
            <person name="Schobel S."/>
            <person name="Town C.D."/>
        </authorList>
    </citation>
    <scope>GENOME REANNOTATION</scope>
    <source>
        <strain>cv. Columbia</strain>
    </source>
</reference>
<reference key="3">
    <citation type="submission" date="2009-03" db="EMBL/GenBank/DDBJ databases">
        <title>ORF cloning and analysis of Arabidopsis transcription factor genes.</title>
        <authorList>
            <person name="Fujita M."/>
            <person name="Mizukado S."/>
            <person name="Seki M."/>
            <person name="Shinozaki K."/>
            <person name="Mitsuda N."/>
            <person name="Takiguchi Y."/>
            <person name="Takagi M."/>
        </authorList>
    </citation>
    <scope>NUCLEOTIDE SEQUENCE [LARGE SCALE GENOMIC DNA]</scope>
</reference>
<reference key="4">
    <citation type="journal article" date="2004" name="Plant Mol. Biol.">
        <title>Identification of a novel plant MAR DNA binding protein localized on chromosomal surfaces.</title>
        <authorList>
            <person name="Fujimoto S."/>
            <person name="Matsunaga S."/>
            <person name="Yonemura M."/>
            <person name="Uchiyama S."/>
            <person name="Azuma T."/>
            <person name="Fukui K."/>
        </authorList>
    </citation>
    <scope>IDENTIFICATION</scope>
    <scope>GENE FAMILY</scope>
    <scope>NOMENCLATURE</scope>
    <source>
        <strain>cv. Columbia</strain>
    </source>
</reference>
<reference key="5">
    <citation type="journal article" date="2013" name="Proc. Natl. Acad. Sci. U.S.A.">
        <title>Arabidopsis thaliana AHL family modulates hypocotyl growth redundantly by interacting with each other via the PPC/DUF296 domain.</title>
        <authorList>
            <person name="Zhao J."/>
            <person name="Favero D.S."/>
            <person name="Peng H."/>
            <person name="Neff M.M."/>
        </authorList>
    </citation>
    <scope>GENE FAMILY</scope>
    <scope>DOMAIN PPC</scope>
</reference>
<sequence length="276" mass="29390">MKGEYREQKSNEMFSKLPHHQQQQQQQQQQHSLTSHFHLSSTVTPTVDDSSIEVVRRPRGRPPGSKNKPKPPVFVTRDTDPPMSPYILEVPSGNDVVEAINRFCRRKSIGVCVLSGSGSVANVTLRQPSPAALGSTITFHGKFDLLSVSATFLPPPPRTSLSPPVSNFFTVSLAGPQGQIIGGFVAGPLISAGTVYVIAASFNNPSYHRLPAEEEQKHSAGTGEREGQSPPVSGGGEESGQMAGSGGESCGVSMYSCHMGGSDVIWAPTARAPPPY</sequence>
<accession>Q9LTA2</accession>
<evidence type="ECO:0000250" key="1">
    <source>
        <dbReference type="UniProtKB" id="Q8VYJ2"/>
    </source>
</evidence>
<evidence type="ECO:0000255" key="2">
    <source>
        <dbReference type="PROSITE-ProRule" id="PRU01078"/>
    </source>
</evidence>
<evidence type="ECO:0000256" key="3">
    <source>
        <dbReference type="SAM" id="MobiDB-lite"/>
    </source>
</evidence>
<evidence type="ECO:0000269" key="4">
    <source>
    </source>
</evidence>
<evidence type="ECO:0000303" key="5">
    <source>
    </source>
</evidence>
<evidence type="ECO:0000305" key="6"/>
<evidence type="ECO:0000312" key="7">
    <source>
        <dbReference type="Araport" id="AT5G49700"/>
    </source>
</evidence>
<evidence type="ECO:0000312" key="8">
    <source>
        <dbReference type="EMBL" id="BAA98158.1"/>
    </source>
</evidence>
<evidence type="ECO:0000312" key="9">
    <source>
        <dbReference type="EMBL" id="FAA00288.1"/>
    </source>
</evidence>
<organism>
    <name type="scientific">Arabidopsis thaliana</name>
    <name type="common">Mouse-ear cress</name>
    <dbReference type="NCBI Taxonomy" id="3702"/>
    <lineage>
        <taxon>Eukaryota</taxon>
        <taxon>Viridiplantae</taxon>
        <taxon>Streptophyta</taxon>
        <taxon>Embryophyta</taxon>
        <taxon>Tracheophyta</taxon>
        <taxon>Spermatophyta</taxon>
        <taxon>Magnoliopsida</taxon>
        <taxon>eudicotyledons</taxon>
        <taxon>Gunneridae</taxon>
        <taxon>Pentapetalae</taxon>
        <taxon>rosids</taxon>
        <taxon>malvids</taxon>
        <taxon>Brassicales</taxon>
        <taxon>Brassicaceae</taxon>
        <taxon>Camelineae</taxon>
        <taxon>Arabidopsis</taxon>
    </lineage>
</organism>
<protein>
    <recommendedName>
        <fullName evidence="9">AT-hook motif nuclear-localized protein 17</fullName>
    </recommendedName>
</protein>
<name>AHL17_ARATH</name>
<keyword id="KW-0238">DNA-binding</keyword>
<keyword id="KW-0539">Nucleus</keyword>
<keyword id="KW-1185">Reference proteome</keyword>
<keyword id="KW-0804">Transcription</keyword>
<keyword id="KW-0805">Transcription regulation</keyword>